<dbReference type="EMBL" id="AL157959">
    <property type="protein sequence ID" value="CAM08454.1"/>
    <property type="molecule type" value="Genomic_DNA"/>
</dbReference>
<dbReference type="PIR" id="H81894">
    <property type="entry name" value="H81894"/>
</dbReference>
<dbReference type="RefSeq" id="WP_002246169.1">
    <property type="nucleotide sequence ID" value="NC_003116.1"/>
</dbReference>
<dbReference type="SMR" id="Q9JUK9"/>
<dbReference type="EnsemblBacteria" id="CAM08454">
    <property type="protein sequence ID" value="CAM08454"/>
    <property type="gene ID" value="NMA1266"/>
</dbReference>
<dbReference type="KEGG" id="nma:NMA1266"/>
<dbReference type="HOGENOM" id="CLU_001981_5_0_4"/>
<dbReference type="Proteomes" id="UP000000626">
    <property type="component" value="Chromosome"/>
</dbReference>
<dbReference type="GO" id="GO:0005886">
    <property type="term" value="C:plasma membrane"/>
    <property type="evidence" value="ECO:0007669"/>
    <property type="project" value="UniProtKB-SubCell"/>
</dbReference>
<dbReference type="GO" id="GO:0005524">
    <property type="term" value="F:ATP binding"/>
    <property type="evidence" value="ECO:0007669"/>
    <property type="project" value="UniProtKB-KW"/>
</dbReference>
<dbReference type="GO" id="GO:0003677">
    <property type="term" value="F:DNA binding"/>
    <property type="evidence" value="ECO:0007669"/>
    <property type="project" value="UniProtKB-KW"/>
</dbReference>
<dbReference type="GO" id="GO:0051301">
    <property type="term" value="P:cell division"/>
    <property type="evidence" value="ECO:0007669"/>
    <property type="project" value="UniProtKB-KW"/>
</dbReference>
<dbReference type="GO" id="GO:0007059">
    <property type="term" value="P:chromosome segregation"/>
    <property type="evidence" value="ECO:0007669"/>
    <property type="project" value="UniProtKB-KW"/>
</dbReference>
<dbReference type="CDD" id="cd01127">
    <property type="entry name" value="TrwB_TraG_TraD_VirD4"/>
    <property type="match status" value="1"/>
</dbReference>
<dbReference type="FunFam" id="3.40.50.300:FF:000209">
    <property type="entry name" value="Cell division protein FtsK"/>
    <property type="match status" value="1"/>
</dbReference>
<dbReference type="Gene3D" id="3.30.980.40">
    <property type="match status" value="1"/>
</dbReference>
<dbReference type="Gene3D" id="3.40.50.300">
    <property type="entry name" value="P-loop containing nucleotide triphosphate hydrolases"/>
    <property type="match status" value="1"/>
</dbReference>
<dbReference type="Gene3D" id="1.10.10.10">
    <property type="entry name" value="Winged helix-like DNA-binding domain superfamily/Winged helix DNA-binding domain"/>
    <property type="match status" value="1"/>
</dbReference>
<dbReference type="InterPro" id="IPR050206">
    <property type="entry name" value="FtsK/SpoIIIE/SftA"/>
</dbReference>
<dbReference type="InterPro" id="IPR041027">
    <property type="entry name" value="FtsK_alpha"/>
</dbReference>
<dbReference type="InterPro" id="IPR002543">
    <property type="entry name" value="FtsK_dom"/>
</dbReference>
<dbReference type="InterPro" id="IPR018541">
    <property type="entry name" value="Ftsk_gamma"/>
</dbReference>
<dbReference type="InterPro" id="IPR027417">
    <property type="entry name" value="P-loop_NTPase"/>
</dbReference>
<dbReference type="InterPro" id="IPR036388">
    <property type="entry name" value="WH-like_DNA-bd_sf"/>
</dbReference>
<dbReference type="InterPro" id="IPR036390">
    <property type="entry name" value="WH_DNA-bd_sf"/>
</dbReference>
<dbReference type="PANTHER" id="PTHR22683:SF41">
    <property type="entry name" value="DNA TRANSLOCASE FTSK"/>
    <property type="match status" value="1"/>
</dbReference>
<dbReference type="PANTHER" id="PTHR22683">
    <property type="entry name" value="SPORULATION PROTEIN RELATED"/>
    <property type="match status" value="1"/>
</dbReference>
<dbReference type="Pfam" id="PF17854">
    <property type="entry name" value="FtsK_alpha"/>
    <property type="match status" value="1"/>
</dbReference>
<dbReference type="Pfam" id="PF09397">
    <property type="entry name" value="FtsK_gamma"/>
    <property type="match status" value="1"/>
</dbReference>
<dbReference type="Pfam" id="PF01580">
    <property type="entry name" value="FtsK_SpoIIIE"/>
    <property type="match status" value="1"/>
</dbReference>
<dbReference type="SMART" id="SM00843">
    <property type="entry name" value="Ftsk_gamma"/>
    <property type="match status" value="1"/>
</dbReference>
<dbReference type="SUPFAM" id="SSF52540">
    <property type="entry name" value="P-loop containing nucleoside triphosphate hydrolases"/>
    <property type="match status" value="1"/>
</dbReference>
<dbReference type="SUPFAM" id="SSF46785">
    <property type="entry name" value="Winged helix' DNA-binding domain"/>
    <property type="match status" value="1"/>
</dbReference>
<dbReference type="PROSITE" id="PS50901">
    <property type="entry name" value="FTSK"/>
    <property type="match status" value="1"/>
</dbReference>
<comment type="function">
    <text evidence="1">Essential cell division protein that coordinates cell division and chromosome segregation. The N-terminus is involved in assembly of the cell-division machinery. The C-terminus functions as a DNA motor that moves dsDNA in an ATP-dependent manner towards the dif recombination site, which is located within the replication terminus region. Translocation stops specifically at Xer-dif sites, where FtsK interacts with the Xer recombinase, allowing activation of chromosome unlinking by recombination. FtsK orienting polar sequences (KOPS) guide the direction of DNA translocation. FtsK can remove proteins from DNA as it translocates, but translocation stops specifically at XerCD-dif site, thereby preventing removal of XerC and XerD from dif (By similarity).</text>
</comment>
<comment type="subunit">
    <text evidence="1">Homohexamer. Forms a ring that surrounds DNA (By similarity).</text>
</comment>
<comment type="subcellular location">
    <subcellularLocation>
        <location evidence="1">Cell inner membrane</location>
        <topology evidence="1">Single-pass membrane protein</topology>
    </subcellularLocation>
    <text evidence="1">Located at the septum.</text>
</comment>
<comment type="domain">
    <text evidence="1">Consists of an N-terminal domain, which is sufficient for the localization to the septal ring and is required for cell division, followed by a linker domain, and a C-terminal domain, which forms the translocation motor involved in chromosome segregation. The C-terminal domain can be further subdivided into alpha, beta and gamma subdomains. The alpha and beta subdomains multimerise to produce a hexameric ring, contain the nucleotide binding motif and form the DNA pump. The gamma subdomain is a regulatory subdomain that controls translocation of DNA by recognition of KOPS motifs and interacts with XerD recombinase (By similarity).</text>
</comment>
<comment type="similarity">
    <text evidence="5">Belongs to the FtsK/SpoIIIE/SftA family.</text>
</comment>
<protein>
    <recommendedName>
        <fullName>DNA translocase FtsK 2</fullName>
    </recommendedName>
</protein>
<accession>Q9JUK9</accession>
<accession>A1IRR0</accession>
<proteinExistence type="inferred from homology"/>
<feature type="chain" id="PRO_0000098273" description="DNA translocase FtsK 2">
    <location>
        <begin position="1"/>
        <end position="1014"/>
    </location>
</feature>
<feature type="transmembrane region" description="Helical" evidence="2">
    <location>
        <begin position="1"/>
        <end position="21"/>
    </location>
</feature>
<feature type="domain" description="FtsK" evidence="3">
    <location>
        <begin position="662"/>
        <end position="871"/>
    </location>
</feature>
<feature type="region of interest" description="Disordered" evidence="4">
    <location>
        <begin position="89"/>
        <end position="142"/>
    </location>
</feature>
<feature type="region of interest" description="Disordered" evidence="4">
    <location>
        <begin position="283"/>
        <end position="318"/>
    </location>
</feature>
<feature type="region of interest" description="Disordered" evidence="4">
    <location>
        <begin position="487"/>
        <end position="525"/>
    </location>
</feature>
<feature type="compositionally biased region" description="Acidic residues" evidence="4">
    <location>
        <begin position="121"/>
        <end position="140"/>
    </location>
</feature>
<feature type="compositionally biased region" description="Polar residues" evidence="4">
    <location>
        <begin position="298"/>
        <end position="307"/>
    </location>
</feature>
<feature type="binding site" evidence="3">
    <location>
        <begin position="682"/>
        <end position="687"/>
    </location>
    <ligand>
        <name>ATP</name>
        <dbReference type="ChEBI" id="CHEBI:30616"/>
    </ligand>
</feature>
<name>FTSK2_NEIMA</name>
<sequence length="1014" mass="111024">MFWIVLIVILLLALAGLFFVRAQSEREWMREVSAWQEKKGEKQAELPEIKDGMPDFPELALMLFHAVKTAVYWLFVGVVRFCRNYLAHESEPDRPVPPASANRADVPTASDGYSDSGNGTEEAETEEAEAAEEEAADTEDIATAVIDNRRIPFDRSIAEGLMPSESEISPVRPVFKEITLEEATRALNSAALRETKKRYIDAFEKNETAVPKVRVSDTPMEGLQIIGLDDPVLQRTYSRMFDADKEAFSESADYGFEPYFEKQHPSAFSAVKAENARNAPFRRHAGQGKGQAEAKSPDVSQGQSVSDGTAVRDARRRVSVNLKEPNKATVSAEARISRLIPESRTVVGKRDVEMPSETENVFTETVSSVGYGGPVYDETADIHIEEPAAPDAWVVEPPEVPKVPMPAIDIPPPPPVSEIYNRTYEPPAGFEQVQRSRIAETDHLADDVLNGGWQEETAAIANDGSEGVAERSSGQYLSETEAFGHDSQAVCPFENVPSERPSRRASDTEADEGAFQSEETGAVSEHLPTTDLLLPPLFNPGATQTEEELLENSITIEEKLAEFKVKVKVVDSYSGPVITRYEIEPDVGVRGNSVLNLEKDLARSLGVASIRVVETILGKTCMGLELPNPKRQMIRLSEIFNSPEFAESKSKLTLALGQDITGQPVVTDLGKAPHLLVAGTTGSGKSVGVNAMILSMLFKAAPEDVRMIMIDPKMLELSIYEGIPHLLAPVVTDMKLAANALNWCVNEMEKRYRLMSFMGVRNLAGFNQKIAEAAARGEKIGNPFSLTPDNPEPLEKLPFIVVVVDEFADLMMTAGKKIEELIARLAQKARAAGIHLILATQRPSVDVITGLIKANIPTRIAFQVSSKIDSRTILDQMGAENLLGQGDMLFLPPGTAYPQRVHGAFASDEEVHRVVEYLKQFGEPDYVDDILSGGMSDDLLGISRSGDGETDPMYDEAVSVVLKTRKASISGVQRALRIGYNRAARLIDQMEAEGIVSAPEHNGNRTILVPLDNA</sequence>
<gene>
    <name type="primary">ftsK2</name>
    <name type="ordered locus">NMA1266</name>
</gene>
<reference key="1">
    <citation type="journal article" date="2000" name="Nature">
        <title>Complete DNA sequence of a serogroup A strain of Neisseria meningitidis Z2491.</title>
        <authorList>
            <person name="Parkhill J."/>
            <person name="Achtman M."/>
            <person name="James K.D."/>
            <person name="Bentley S.D."/>
            <person name="Churcher C.M."/>
            <person name="Klee S.R."/>
            <person name="Morelli G."/>
            <person name="Basham D."/>
            <person name="Brown D."/>
            <person name="Chillingworth T."/>
            <person name="Davies R.M."/>
            <person name="Davis P."/>
            <person name="Devlin K."/>
            <person name="Feltwell T."/>
            <person name="Hamlin N."/>
            <person name="Holroyd S."/>
            <person name="Jagels K."/>
            <person name="Leather S."/>
            <person name="Moule S."/>
            <person name="Mungall K.L."/>
            <person name="Quail M.A."/>
            <person name="Rajandream M.A."/>
            <person name="Rutherford K.M."/>
            <person name="Simmonds M."/>
            <person name="Skelton J."/>
            <person name="Whitehead S."/>
            <person name="Spratt B.G."/>
            <person name="Barrell B.G."/>
        </authorList>
    </citation>
    <scope>NUCLEOTIDE SEQUENCE [LARGE SCALE GENOMIC DNA]</scope>
    <source>
        <strain>DSM 15465 / Z2491</strain>
    </source>
</reference>
<keyword id="KW-0067">ATP-binding</keyword>
<keyword id="KW-0131">Cell cycle</keyword>
<keyword id="KW-0132">Cell division</keyword>
<keyword id="KW-0997">Cell inner membrane</keyword>
<keyword id="KW-1003">Cell membrane</keyword>
<keyword id="KW-0159">Chromosome partition</keyword>
<keyword id="KW-0238">DNA-binding</keyword>
<keyword id="KW-0472">Membrane</keyword>
<keyword id="KW-0547">Nucleotide-binding</keyword>
<keyword id="KW-0812">Transmembrane</keyword>
<keyword id="KW-1133">Transmembrane helix</keyword>
<evidence type="ECO:0000250" key="1"/>
<evidence type="ECO:0000255" key="2"/>
<evidence type="ECO:0000255" key="3">
    <source>
        <dbReference type="PROSITE-ProRule" id="PRU00289"/>
    </source>
</evidence>
<evidence type="ECO:0000256" key="4">
    <source>
        <dbReference type="SAM" id="MobiDB-lite"/>
    </source>
</evidence>
<evidence type="ECO:0000305" key="5"/>
<organism>
    <name type="scientific">Neisseria meningitidis serogroup A / serotype 4A (strain DSM 15465 / Z2491)</name>
    <dbReference type="NCBI Taxonomy" id="122587"/>
    <lineage>
        <taxon>Bacteria</taxon>
        <taxon>Pseudomonadati</taxon>
        <taxon>Pseudomonadota</taxon>
        <taxon>Betaproteobacteria</taxon>
        <taxon>Neisseriales</taxon>
        <taxon>Neisseriaceae</taxon>
        <taxon>Neisseria</taxon>
    </lineage>
</organism>